<name>UT119_PEA</name>
<reference evidence="3" key="1">
    <citation type="journal article" date="2000" name="Plant Cell">
        <title>Proteomics of the chloroplast: systematic identification and targeting analysis of lumenal and peripheral thylakoid proteins.</title>
        <authorList>
            <person name="Peltier J.-B."/>
            <person name="Friso G."/>
            <person name="Kalume D.E."/>
            <person name="Roepstorff P."/>
            <person name="Nilsson F."/>
            <person name="Adamska I."/>
            <person name="van Wijk K.J."/>
        </authorList>
    </citation>
    <scope>PROTEIN SEQUENCE</scope>
    <scope>SUBCELLULAR LOCATION</scope>
    <source>
        <strain evidence="1">cv. De Grace</strain>
        <tissue evidence="1">Leaf</tissue>
    </source>
</reference>
<protein>
    <recommendedName>
        <fullName>Unknown protein from spot 119 of 2D-PAGE of thylakoid</fullName>
    </recommendedName>
</protein>
<comment type="subcellular location">
    <subcellularLocation>
        <location evidence="1">Plastid</location>
        <location evidence="1">Chloroplast thylakoid</location>
    </subcellularLocation>
</comment>
<comment type="miscellaneous">
    <text evidence="1">On the 2D-gel the determined pI of this protein is: 4.9, its MW is: 29.9 kDa.</text>
</comment>
<dbReference type="GO" id="GO:0009534">
    <property type="term" value="C:chloroplast thylakoid"/>
    <property type="evidence" value="ECO:0007669"/>
    <property type="project" value="UniProtKB-SubCell"/>
</dbReference>
<keyword id="KW-0150">Chloroplast</keyword>
<keyword id="KW-0903">Direct protein sequencing</keyword>
<keyword id="KW-0934">Plastid</keyword>
<keyword id="KW-0793">Thylakoid</keyword>
<evidence type="ECO:0000269" key="1">
    <source>
    </source>
</evidence>
<evidence type="ECO:0000303" key="2">
    <source>
    </source>
</evidence>
<evidence type="ECO:0000305" key="3"/>
<sequence>AAQEGETLTVEETV</sequence>
<feature type="chain" id="PRO_0000234478" description="Unknown protein from spot 119 of 2D-PAGE of thylakoid">
    <location>
        <begin position="1"/>
        <end position="14" status="greater than"/>
    </location>
</feature>
<feature type="non-terminal residue" evidence="2">
    <location>
        <position position="14"/>
    </location>
</feature>
<organism>
    <name type="scientific">Pisum sativum</name>
    <name type="common">Garden pea</name>
    <name type="synonym">Lathyrus oleraceus</name>
    <dbReference type="NCBI Taxonomy" id="3888"/>
    <lineage>
        <taxon>Eukaryota</taxon>
        <taxon>Viridiplantae</taxon>
        <taxon>Streptophyta</taxon>
        <taxon>Embryophyta</taxon>
        <taxon>Tracheophyta</taxon>
        <taxon>Spermatophyta</taxon>
        <taxon>Magnoliopsida</taxon>
        <taxon>eudicotyledons</taxon>
        <taxon>Gunneridae</taxon>
        <taxon>Pentapetalae</taxon>
        <taxon>rosids</taxon>
        <taxon>fabids</taxon>
        <taxon>Fabales</taxon>
        <taxon>Fabaceae</taxon>
        <taxon>Papilionoideae</taxon>
        <taxon>50 kb inversion clade</taxon>
        <taxon>NPAAA clade</taxon>
        <taxon>Hologalegina</taxon>
        <taxon>IRL clade</taxon>
        <taxon>Fabeae</taxon>
        <taxon>Pisum</taxon>
    </lineage>
</organism>
<proteinExistence type="evidence at protein level"/>
<accession>P82335</accession>